<evidence type="ECO:0000255" key="1">
    <source>
        <dbReference type="HAMAP-Rule" id="MF_00044"/>
    </source>
</evidence>
<reference key="1">
    <citation type="journal article" date="2011" name="J. Bacteriol.">
        <title>Comparative genomics of 28 Salmonella enterica isolates: evidence for CRISPR-mediated adaptive sublineage evolution.</title>
        <authorList>
            <person name="Fricke W.F."/>
            <person name="Mammel M.K."/>
            <person name="McDermott P.F."/>
            <person name="Tartera C."/>
            <person name="White D.G."/>
            <person name="Leclerc J.E."/>
            <person name="Ravel J."/>
            <person name="Cebula T.A."/>
        </authorList>
    </citation>
    <scope>NUCLEOTIDE SEQUENCE [LARGE SCALE GENOMIC DNA]</scope>
    <source>
        <strain>SL476</strain>
    </source>
</reference>
<feature type="chain" id="PRO_1000091039" description="Aspartate--tRNA ligase">
    <location>
        <begin position="1"/>
        <end position="590"/>
    </location>
</feature>
<feature type="region of interest" description="Aspartate" evidence="1">
    <location>
        <begin position="195"/>
        <end position="198"/>
    </location>
</feature>
<feature type="binding site" evidence="1">
    <location>
        <position position="171"/>
    </location>
    <ligand>
        <name>L-aspartate</name>
        <dbReference type="ChEBI" id="CHEBI:29991"/>
    </ligand>
</feature>
<feature type="binding site" evidence="1">
    <location>
        <begin position="217"/>
        <end position="219"/>
    </location>
    <ligand>
        <name>ATP</name>
        <dbReference type="ChEBI" id="CHEBI:30616"/>
    </ligand>
</feature>
<feature type="binding site" evidence="1">
    <location>
        <position position="217"/>
    </location>
    <ligand>
        <name>L-aspartate</name>
        <dbReference type="ChEBI" id="CHEBI:29991"/>
    </ligand>
</feature>
<feature type="binding site" evidence="1">
    <location>
        <position position="226"/>
    </location>
    <ligand>
        <name>ATP</name>
        <dbReference type="ChEBI" id="CHEBI:30616"/>
    </ligand>
</feature>
<feature type="binding site" evidence="1">
    <location>
        <position position="448"/>
    </location>
    <ligand>
        <name>L-aspartate</name>
        <dbReference type="ChEBI" id="CHEBI:29991"/>
    </ligand>
</feature>
<feature type="binding site" evidence="1">
    <location>
        <position position="482"/>
    </location>
    <ligand>
        <name>ATP</name>
        <dbReference type="ChEBI" id="CHEBI:30616"/>
    </ligand>
</feature>
<feature type="binding site" evidence="1">
    <location>
        <position position="489"/>
    </location>
    <ligand>
        <name>L-aspartate</name>
        <dbReference type="ChEBI" id="CHEBI:29991"/>
    </ligand>
</feature>
<feature type="binding site" evidence="1">
    <location>
        <begin position="534"/>
        <end position="537"/>
    </location>
    <ligand>
        <name>ATP</name>
        <dbReference type="ChEBI" id="CHEBI:30616"/>
    </ligand>
</feature>
<comment type="function">
    <text evidence="1">Catalyzes the attachment of L-aspartate to tRNA(Asp) in a two-step reaction: L-aspartate is first activated by ATP to form Asp-AMP and then transferred to the acceptor end of tRNA(Asp).</text>
</comment>
<comment type="catalytic activity">
    <reaction evidence="1">
        <text>tRNA(Asp) + L-aspartate + ATP = L-aspartyl-tRNA(Asp) + AMP + diphosphate</text>
        <dbReference type="Rhea" id="RHEA:19649"/>
        <dbReference type="Rhea" id="RHEA-COMP:9660"/>
        <dbReference type="Rhea" id="RHEA-COMP:9678"/>
        <dbReference type="ChEBI" id="CHEBI:29991"/>
        <dbReference type="ChEBI" id="CHEBI:30616"/>
        <dbReference type="ChEBI" id="CHEBI:33019"/>
        <dbReference type="ChEBI" id="CHEBI:78442"/>
        <dbReference type="ChEBI" id="CHEBI:78516"/>
        <dbReference type="ChEBI" id="CHEBI:456215"/>
        <dbReference type="EC" id="6.1.1.12"/>
    </reaction>
</comment>
<comment type="subunit">
    <text evidence="1">Homodimer.</text>
</comment>
<comment type="subcellular location">
    <subcellularLocation>
        <location evidence="1">Cytoplasm</location>
    </subcellularLocation>
</comment>
<comment type="similarity">
    <text evidence="1">Belongs to the class-II aminoacyl-tRNA synthetase family. Type 1 subfamily.</text>
</comment>
<sequence length="590" mass="65753">MRTEYCGQLRLSHVGQQVTLCGWVNRRRDLGSLIFIDMRDREGIVQVFFDPDRADALKLASELRNEFCIQVTGTVRARDAKNVNADMATGEIEVLASSLTIINRADSLPLDANHVNTEEARLKYRYLDLRRPEMAQRLKTRAKITSLVRRFMDDHGFLDIETPMLTKATPEGARDYLVPSRVHKGKFYALPQSPQLFKQLLMMSGFDRYYQIVKCFRDEDLRADRQPEFTQIDVETSFMTAPQVREVMEALVRHLWLEVKGVDLGDFPVMTFAEAERRYGSDKPDLRNPMELVDVADLLKSVEFAVFAGPANDPKGRVAALRVPGGAQLSRKQIDDYGNFVKIYGAKGLAYIKVNERAKGLDGINSPVAKFLTADIVDAILERTGAQDGDMIFFGADNKKVVADALGALRLKLGKDLSLTDEDKWAPLWVIDFPMFEDDGEGGLTAMHHPFTAPRDMTASELKTAPEEAVANAYDMVINGYEVGGGSVRIHNGEMQQTVFGILGINEQEQREKFGFLLDALKYGTPPHAGLAFGLDRLTMLLTGTDNIRDVIAFPKTTAAACLMTEAPSFANQAALTELGIQVVKKAENN</sequence>
<proteinExistence type="inferred from homology"/>
<keyword id="KW-0030">Aminoacyl-tRNA synthetase</keyword>
<keyword id="KW-0067">ATP-binding</keyword>
<keyword id="KW-0963">Cytoplasm</keyword>
<keyword id="KW-0436">Ligase</keyword>
<keyword id="KW-0547">Nucleotide-binding</keyword>
<keyword id="KW-0648">Protein biosynthesis</keyword>
<organism>
    <name type="scientific">Salmonella heidelberg (strain SL476)</name>
    <dbReference type="NCBI Taxonomy" id="454169"/>
    <lineage>
        <taxon>Bacteria</taxon>
        <taxon>Pseudomonadati</taxon>
        <taxon>Pseudomonadota</taxon>
        <taxon>Gammaproteobacteria</taxon>
        <taxon>Enterobacterales</taxon>
        <taxon>Enterobacteriaceae</taxon>
        <taxon>Salmonella</taxon>
    </lineage>
</organism>
<protein>
    <recommendedName>
        <fullName evidence="1">Aspartate--tRNA ligase</fullName>
        <ecNumber evidence="1">6.1.1.12</ecNumber>
    </recommendedName>
    <alternativeName>
        <fullName evidence="1">Aspartyl-tRNA synthetase</fullName>
        <shortName evidence="1">AspRS</shortName>
    </alternativeName>
</protein>
<gene>
    <name evidence="1" type="primary">aspS</name>
    <name type="ordered locus">SeHA_C2115</name>
</gene>
<name>SYD_SALHS</name>
<dbReference type="EC" id="6.1.1.12" evidence="1"/>
<dbReference type="EMBL" id="CP001120">
    <property type="protein sequence ID" value="ACF67356.1"/>
    <property type="molecule type" value="Genomic_DNA"/>
</dbReference>
<dbReference type="RefSeq" id="WP_001258629.1">
    <property type="nucleotide sequence ID" value="NC_011083.1"/>
</dbReference>
<dbReference type="SMR" id="B4T7Z9"/>
<dbReference type="KEGG" id="seh:SeHA_C2115"/>
<dbReference type="HOGENOM" id="CLU_014330_3_2_6"/>
<dbReference type="Proteomes" id="UP000001866">
    <property type="component" value="Chromosome"/>
</dbReference>
<dbReference type="GO" id="GO:0005737">
    <property type="term" value="C:cytoplasm"/>
    <property type="evidence" value="ECO:0007669"/>
    <property type="project" value="UniProtKB-SubCell"/>
</dbReference>
<dbReference type="GO" id="GO:0004815">
    <property type="term" value="F:aspartate-tRNA ligase activity"/>
    <property type="evidence" value="ECO:0007669"/>
    <property type="project" value="UniProtKB-UniRule"/>
</dbReference>
<dbReference type="GO" id="GO:0005524">
    <property type="term" value="F:ATP binding"/>
    <property type="evidence" value="ECO:0007669"/>
    <property type="project" value="UniProtKB-UniRule"/>
</dbReference>
<dbReference type="GO" id="GO:0003676">
    <property type="term" value="F:nucleic acid binding"/>
    <property type="evidence" value="ECO:0007669"/>
    <property type="project" value="InterPro"/>
</dbReference>
<dbReference type="GO" id="GO:0006422">
    <property type="term" value="P:aspartyl-tRNA aminoacylation"/>
    <property type="evidence" value="ECO:0007669"/>
    <property type="project" value="UniProtKB-UniRule"/>
</dbReference>
<dbReference type="CDD" id="cd00777">
    <property type="entry name" value="AspRS_core"/>
    <property type="match status" value="1"/>
</dbReference>
<dbReference type="CDD" id="cd04317">
    <property type="entry name" value="EcAspRS_like_N"/>
    <property type="match status" value="1"/>
</dbReference>
<dbReference type="FunFam" id="2.40.50.140:FF:000080">
    <property type="entry name" value="Aspartate--tRNA ligase"/>
    <property type="match status" value="1"/>
</dbReference>
<dbReference type="FunFam" id="3.30.1360.30:FF:000001">
    <property type="entry name" value="Aspartate--tRNA ligase"/>
    <property type="match status" value="1"/>
</dbReference>
<dbReference type="Gene3D" id="3.30.930.10">
    <property type="entry name" value="Bira Bifunctional Protein, Domain 2"/>
    <property type="match status" value="1"/>
</dbReference>
<dbReference type="Gene3D" id="3.30.1360.30">
    <property type="entry name" value="GAD-like domain"/>
    <property type="match status" value="1"/>
</dbReference>
<dbReference type="Gene3D" id="2.40.50.140">
    <property type="entry name" value="Nucleic acid-binding proteins"/>
    <property type="match status" value="1"/>
</dbReference>
<dbReference type="HAMAP" id="MF_00044">
    <property type="entry name" value="Asp_tRNA_synth_type1"/>
    <property type="match status" value="1"/>
</dbReference>
<dbReference type="InterPro" id="IPR004364">
    <property type="entry name" value="Aa-tRNA-synt_II"/>
</dbReference>
<dbReference type="InterPro" id="IPR006195">
    <property type="entry name" value="aa-tRNA-synth_II"/>
</dbReference>
<dbReference type="InterPro" id="IPR045864">
    <property type="entry name" value="aa-tRNA-synth_II/BPL/LPL"/>
</dbReference>
<dbReference type="InterPro" id="IPR004524">
    <property type="entry name" value="Asp-tRNA-ligase_1"/>
</dbReference>
<dbReference type="InterPro" id="IPR047089">
    <property type="entry name" value="Asp-tRNA-ligase_1_N"/>
</dbReference>
<dbReference type="InterPro" id="IPR002312">
    <property type="entry name" value="Asp/Asn-tRNA-synth_IIb"/>
</dbReference>
<dbReference type="InterPro" id="IPR047090">
    <property type="entry name" value="AspRS_core"/>
</dbReference>
<dbReference type="InterPro" id="IPR004115">
    <property type="entry name" value="GAD-like_sf"/>
</dbReference>
<dbReference type="InterPro" id="IPR029351">
    <property type="entry name" value="GAD_dom"/>
</dbReference>
<dbReference type="InterPro" id="IPR012340">
    <property type="entry name" value="NA-bd_OB-fold"/>
</dbReference>
<dbReference type="InterPro" id="IPR004365">
    <property type="entry name" value="NA-bd_OB_tRNA"/>
</dbReference>
<dbReference type="NCBIfam" id="TIGR00459">
    <property type="entry name" value="aspS_bact"/>
    <property type="match status" value="1"/>
</dbReference>
<dbReference type="NCBIfam" id="NF001750">
    <property type="entry name" value="PRK00476.1"/>
    <property type="match status" value="1"/>
</dbReference>
<dbReference type="PANTHER" id="PTHR22594:SF5">
    <property type="entry name" value="ASPARTATE--TRNA LIGASE, MITOCHONDRIAL"/>
    <property type="match status" value="1"/>
</dbReference>
<dbReference type="PANTHER" id="PTHR22594">
    <property type="entry name" value="ASPARTYL/LYSYL-TRNA SYNTHETASE"/>
    <property type="match status" value="1"/>
</dbReference>
<dbReference type="Pfam" id="PF02938">
    <property type="entry name" value="GAD"/>
    <property type="match status" value="1"/>
</dbReference>
<dbReference type="Pfam" id="PF00152">
    <property type="entry name" value="tRNA-synt_2"/>
    <property type="match status" value="1"/>
</dbReference>
<dbReference type="Pfam" id="PF01336">
    <property type="entry name" value="tRNA_anti-codon"/>
    <property type="match status" value="1"/>
</dbReference>
<dbReference type="PRINTS" id="PR01042">
    <property type="entry name" value="TRNASYNTHASP"/>
</dbReference>
<dbReference type="SUPFAM" id="SSF55681">
    <property type="entry name" value="Class II aaRS and biotin synthetases"/>
    <property type="match status" value="1"/>
</dbReference>
<dbReference type="SUPFAM" id="SSF55261">
    <property type="entry name" value="GAD domain-like"/>
    <property type="match status" value="1"/>
</dbReference>
<dbReference type="SUPFAM" id="SSF50249">
    <property type="entry name" value="Nucleic acid-binding proteins"/>
    <property type="match status" value="1"/>
</dbReference>
<dbReference type="PROSITE" id="PS50862">
    <property type="entry name" value="AA_TRNA_LIGASE_II"/>
    <property type="match status" value="1"/>
</dbReference>
<accession>B4T7Z9</accession>